<reference key="1">
    <citation type="submission" date="2004-07" db="EMBL/GenBank/DDBJ databases">
        <authorList>
            <consortium name="NIH - Zebrafish Gene Collection (ZGC) project"/>
        </authorList>
    </citation>
    <scope>NUCLEOTIDE SEQUENCE [LARGE SCALE MRNA]</scope>
    <source>
        <tissue>Embryo</tissue>
    </source>
</reference>
<organism>
    <name type="scientific">Danio rerio</name>
    <name type="common">Zebrafish</name>
    <name type="synonym">Brachydanio rerio</name>
    <dbReference type="NCBI Taxonomy" id="7955"/>
    <lineage>
        <taxon>Eukaryota</taxon>
        <taxon>Metazoa</taxon>
        <taxon>Chordata</taxon>
        <taxon>Craniata</taxon>
        <taxon>Vertebrata</taxon>
        <taxon>Euteleostomi</taxon>
        <taxon>Actinopterygii</taxon>
        <taxon>Neopterygii</taxon>
        <taxon>Teleostei</taxon>
        <taxon>Ostariophysi</taxon>
        <taxon>Cypriniformes</taxon>
        <taxon>Danionidae</taxon>
        <taxon>Danioninae</taxon>
        <taxon>Danio</taxon>
    </lineage>
</organism>
<name>TIM10_DANRE</name>
<evidence type="ECO:0000250" key="1"/>
<evidence type="ECO:0000305" key="2"/>
<proteinExistence type="inferred from homology"/>
<feature type="chain" id="PRO_0000228054" description="Mitochondrial import inner membrane translocase subunit Tim10">
    <location>
        <begin position="1"/>
        <end position="88"/>
    </location>
</feature>
<feature type="short sequence motif" description="Twin CX3C motif">
    <location>
        <begin position="29"/>
        <end position="54"/>
    </location>
</feature>
<feature type="disulfide bond" evidence="1">
    <location>
        <begin position="29"/>
        <end position="54"/>
    </location>
</feature>
<feature type="disulfide bond" evidence="1">
    <location>
        <begin position="33"/>
        <end position="50"/>
    </location>
</feature>
<sequence length="88" mass="9956">MDPMKAQQLAAELEVEMMADMYNRMTNACHRKCVPPHYKEAELSKGEAVCLDRCVAKYLDLHERLGRKLTELSVQDEEVMRKAAAGTG</sequence>
<protein>
    <recommendedName>
        <fullName>Mitochondrial import inner membrane translocase subunit Tim10</fullName>
    </recommendedName>
</protein>
<comment type="function">
    <text evidence="1">Mitochondrial intermembrane chaperone that participates in the import and insertion of multi-pass transmembrane proteins into the mitochondrial inner membrane. May also be required for the transfer of beta-barrel precursors from the TOM complex to the sorting and assembly machinery (SAM complex) of the outer membrane. Acts as a chaperone-like protein that protects the hydrophobic precursors from aggregation and guide them through the mitochondrial intermembrane space (By similarity).</text>
</comment>
<comment type="subunit">
    <text evidence="1">Heterohexamer; composed of 3 copies of TIMM9 and 3 copies of TIMM10/TIM10A, named soluble 70 kDa complex. The complex forms a 6-bladed alpha-propeller structure and associates with the TIMM22 component of the TIM22 complex. Interacts with multi-pass transmembrane proteins in transit (By similarity).</text>
</comment>
<comment type="subcellular location">
    <subcellularLocation>
        <location evidence="1">Mitochondrion inner membrane</location>
        <topology evidence="1">Peripheral membrane protein</topology>
        <orientation evidence="1">Intermembrane side</orientation>
    </subcellularLocation>
</comment>
<comment type="domain">
    <text evidence="1">The twin CX3C motif contains 4 conserved Cys residues that form 2 disulfide bonds in the mitochondrial intermembrane space. However, during the transit of TIMM10 from cytoplasm into mitochondrion, the Cys residues probably coordinate zinc, thereby preventing folding and allowing its transfer across mitochondrial outer membrane (By similarity).</text>
</comment>
<comment type="similarity">
    <text evidence="2">Belongs to the small Tim family.</text>
</comment>
<accession>Q6DI06</accession>
<keyword id="KW-0143">Chaperone</keyword>
<keyword id="KW-1015">Disulfide bond</keyword>
<keyword id="KW-0472">Membrane</keyword>
<keyword id="KW-0479">Metal-binding</keyword>
<keyword id="KW-0496">Mitochondrion</keyword>
<keyword id="KW-0999">Mitochondrion inner membrane</keyword>
<keyword id="KW-0653">Protein transport</keyword>
<keyword id="KW-1185">Reference proteome</keyword>
<keyword id="KW-0811">Translocation</keyword>
<keyword id="KW-0813">Transport</keyword>
<keyword id="KW-0862">Zinc</keyword>
<gene>
    <name type="primary">timm10</name>
    <name type="synonym">tim10</name>
    <name type="ORF">zgc:86900</name>
</gene>
<dbReference type="EMBL" id="BC075785">
    <property type="protein sequence ID" value="AAH75785.1"/>
    <property type="molecule type" value="mRNA"/>
</dbReference>
<dbReference type="RefSeq" id="NP_001002678.1">
    <property type="nucleotide sequence ID" value="NM_001002678.3"/>
</dbReference>
<dbReference type="SMR" id="Q6DI06"/>
<dbReference type="FunCoup" id="Q6DI06">
    <property type="interactions" value="2863"/>
</dbReference>
<dbReference type="STRING" id="7955.ENSDARP00000091094"/>
<dbReference type="PaxDb" id="7955-ENSDARP00000091094"/>
<dbReference type="Ensembl" id="ENSDART00000100321">
    <property type="protein sequence ID" value="ENSDARP00000091094"/>
    <property type="gene ID" value="ENSDARG00000069116"/>
</dbReference>
<dbReference type="GeneID" id="436951"/>
<dbReference type="KEGG" id="dre:436951"/>
<dbReference type="AGR" id="ZFIN:ZDB-GENE-040718-427"/>
<dbReference type="CTD" id="26519"/>
<dbReference type="ZFIN" id="ZDB-GENE-040718-427">
    <property type="gene designation" value="timm10"/>
</dbReference>
<dbReference type="eggNOG" id="KOG3480">
    <property type="taxonomic scope" value="Eukaryota"/>
</dbReference>
<dbReference type="HOGENOM" id="CLU_162151_2_0_1"/>
<dbReference type="InParanoid" id="Q6DI06"/>
<dbReference type="OMA" id="VGENMQK"/>
<dbReference type="OrthoDB" id="274922at2759"/>
<dbReference type="PhylomeDB" id="Q6DI06"/>
<dbReference type="TreeFam" id="TF106193"/>
<dbReference type="PRO" id="PR:Q6DI06"/>
<dbReference type="Proteomes" id="UP000000437">
    <property type="component" value="Chromosome 1"/>
</dbReference>
<dbReference type="Bgee" id="ENSDARG00000069116">
    <property type="expression patterns" value="Expressed in tail and 34 other cell types or tissues"/>
</dbReference>
<dbReference type="GO" id="GO:0005743">
    <property type="term" value="C:mitochondrial inner membrane"/>
    <property type="evidence" value="ECO:0000318"/>
    <property type="project" value="GO_Central"/>
</dbReference>
<dbReference type="GO" id="GO:0046872">
    <property type="term" value="F:metal ion binding"/>
    <property type="evidence" value="ECO:0007669"/>
    <property type="project" value="UniProtKB-KW"/>
</dbReference>
<dbReference type="GO" id="GO:0045039">
    <property type="term" value="P:protein insertion into mitochondrial inner membrane"/>
    <property type="evidence" value="ECO:0000318"/>
    <property type="project" value="GO_Central"/>
</dbReference>
<dbReference type="FunFam" id="1.10.287.810:FF:000002">
    <property type="entry name" value="Mitochondrial import inner membrane translocase subunit tim10"/>
    <property type="match status" value="1"/>
</dbReference>
<dbReference type="Gene3D" id="1.10.287.810">
    <property type="entry name" value="Mitochondrial import inner membrane translocase subunit tim13 like domains"/>
    <property type="match status" value="1"/>
</dbReference>
<dbReference type="InterPro" id="IPR004217">
    <property type="entry name" value="Tim10-like"/>
</dbReference>
<dbReference type="InterPro" id="IPR035427">
    <property type="entry name" value="Tim10-like_dom_sf"/>
</dbReference>
<dbReference type="PANTHER" id="PTHR11038">
    <property type="entry name" value="MITOCHONDRIAL IMPORT INNER MEMBRANE TRANSLOCASE SUBUNIT TIM10"/>
    <property type="match status" value="1"/>
</dbReference>
<dbReference type="PANTHER" id="PTHR11038:SF16">
    <property type="entry name" value="MITOCHONDRIAL IMPORT INNER MEMBRANE TRANSLOCASE SUBUNIT TIM10"/>
    <property type="match status" value="1"/>
</dbReference>
<dbReference type="Pfam" id="PF02953">
    <property type="entry name" value="zf-Tim10_DDP"/>
    <property type="match status" value="1"/>
</dbReference>
<dbReference type="SUPFAM" id="SSF144122">
    <property type="entry name" value="Tim10-like"/>
    <property type="match status" value="1"/>
</dbReference>